<evidence type="ECO:0000250" key="1"/>
<evidence type="ECO:0000255" key="2">
    <source>
        <dbReference type="HAMAP-Rule" id="MF_03046"/>
    </source>
</evidence>
<accession>B4JLC3</accession>
<name>ENY2_DROGR</name>
<keyword id="KW-0010">Activator</keyword>
<keyword id="KW-0156">Chromatin regulator</keyword>
<keyword id="KW-0963">Cytoplasm</keyword>
<keyword id="KW-0509">mRNA transport</keyword>
<keyword id="KW-0539">Nucleus</keyword>
<keyword id="KW-0653">Protein transport</keyword>
<keyword id="KW-1185">Reference proteome</keyword>
<keyword id="KW-0804">Transcription</keyword>
<keyword id="KW-0805">Transcription regulation</keyword>
<keyword id="KW-0811">Translocation</keyword>
<keyword id="KW-0813">Transport</keyword>
<dbReference type="EMBL" id="CH916370">
    <property type="protein sequence ID" value="EDW00376.1"/>
    <property type="molecule type" value="Genomic_DNA"/>
</dbReference>
<dbReference type="SMR" id="B4JLC3"/>
<dbReference type="FunCoup" id="B4JLC3">
    <property type="interactions" value="1600"/>
</dbReference>
<dbReference type="STRING" id="7222.B4JLC3"/>
<dbReference type="EnsemblMetazoa" id="FBtr0147306">
    <property type="protein sequence ID" value="FBpp0145798"/>
    <property type="gene ID" value="FBgn0119371"/>
</dbReference>
<dbReference type="EnsemblMetazoa" id="XM_001991715.2">
    <property type="protein sequence ID" value="XP_001991751.1"/>
    <property type="gene ID" value="LOC6564611"/>
</dbReference>
<dbReference type="GeneID" id="6564611"/>
<dbReference type="KEGG" id="dgr:6564611"/>
<dbReference type="CTD" id="45848"/>
<dbReference type="eggNOG" id="KOG4479">
    <property type="taxonomic scope" value="Eukaryota"/>
</dbReference>
<dbReference type="HOGENOM" id="CLU_134052_1_3_1"/>
<dbReference type="InParanoid" id="B4JLC3"/>
<dbReference type="OMA" id="RLMCRNI"/>
<dbReference type="OrthoDB" id="6221744at2759"/>
<dbReference type="PhylomeDB" id="B4JLC3"/>
<dbReference type="Proteomes" id="UP000001070">
    <property type="component" value="Unassembled WGS sequence"/>
</dbReference>
<dbReference type="GO" id="GO:0005737">
    <property type="term" value="C:cytoplasm"/>
    <property type="evidence" value="ECO:0007669"/>
    <property type="project" value="UniProtKB-SubCell"/>
</dbReference>
<dbReference type="GO" id="GO:0071819">
    <property type="term" value="C:DUBm complex"/>
    <property type="evidence" value="ECO:0007669"/>
    <property type="project" value="UniProtKB-UniRule"/>
</dbReference>
<dbReference type="GO" id="GO:0005643">
    <property type="term" value="C:nuclear pore"/>
    <property type="evidence" value="ECO:0000250"/>
    <property type="project" value="UniProtKB"/>
</dbReference>
<dbReference type="GO" id="GO:0005654">
    <property type="term" value="C:nucleoplasm"/>
    <property type="evidence" value="ECO:0007669"/>
    <property type="project" value="UniProtKB-SubCell"/>
</dbReference>
<dbReference type="GO" id="GO:0000124">
    <property type="term" value="C:SAGA complex"/>
    <property type="evidence" value="ECO:0000250"/>
    <property type="project" value="UniProtKB"/>
</dbReference>
<dbReference type="GO" id="GO:0070390">
    <property type="term" value="C:transcription export complex 2"/>
    <property type="evidence" value="ECO:0007669"/>
    <property type="project" value="UniProtKB-UniRule"/>
</dbReference>
<dbReference type="GO" id="GO:0043035">
    <property type="term" value="F:chromatin insulator sequence binding"/>
    <property type="evidence" value="ECO:0000250"/>
    <property type="project" value="UniProtKB"/>
</dbReference>
<dbReference type="GO" id="GO:0003713">
    <property type="term" value="F:transcription coactivator activity"/>
    <property type="evidence" value="ECO:0007669"/>
    <property type="project" value="UniProtKB-UniRule"/>
</dbReference>
<dbReference type="GO" id="GO:0006325">
    <property type="term" value="P:chromatin organization"/>
    <property type="evidence" value="ECO:0007669"/>
    <property type="project" value="UniProtKB-KW"/>
</dbReference>
<dbReference type="GO" id="GO:0006406">
    <property type="term" value="P:mRNA export from nucleus"/>
    <property type="evidence" value="ECO:0000250"/>
    <property type="project" value="UniProtKB"/>
</dbReference>
<dbReference type="GO" id="GO:0045944">
    <property type="term" value="P:positive regulation of transcription by RNA polymerase II"/>
    <property type="evidence" value="ECO:0000250"/>
    <property type="project" value="UniProtKB"/>
</dbReference>
<dbReference type="GO" id="GO:0015031">
    <property type="term" value="P:protein transport"/>
    <property type="evidence" value="ECO:0007669"/>
    <property type="project" value="UniProtKB-KW"/>
</dbReference>
<dbReference type="GO" id="GO:0006368">
    <property type="term" value="P:transcription elongation by RNA polymerase II"/>
    <property type="evidence" value="ECO:0007669"/>
    <property type="project" value="UniProtKB-UniRule"/>
</dbReference>
<dbReference type="FunFam" id="1.10.246.140:FF:000002">
    <property type="entry name" value="Enhancer of yellow 2 transcription factor"/>
    <property type="match status" value="1"/>
</dbReference>
<dbReference type="Gene3D" id="1.10.246.140">
    <property type="match status" value="1"/>
</dbReference>
<dbReference type="HAMAP" id="MF_03046">
    <property type="entry name" value="ENY2_Sus1"/>
    <property type="match status" value="1"/>
</dbReference>
<dbReference type="InterPro" id="IPR018783">
    <property type="entry name" value="TF_ENY2"/>
</dbReference>
<dbReference type="InterPro" id="IPR038212">
    <property type="entry name" value="TF_EnY2_sf"/>
</dbReference>
<dbReference type="PANTHER" id="PTHR12514">
    <property type="entry name" value="ENHANCER OF YELLOW 2 TRANSCRIPTION FACTOR"/>
    <property type="match status" value="1"/>
</dbReference>
<dbReference type="Pfam" id="PF10163">
    <property type="entry name" value="EnY2"/>
    <property type="match status" value="1"/>
</dbReference>
<feature type="chain" id="PRO_0000367555" description="Enhancer of yellow 2 transcription factor">
    <location>
        <begin position="1"/>
        <end position="94"/>
    </location>
</feature>
<comment type="function">
    <text evidence="1">Involved in mRNA export coupled transcription activation by association with both the AMEX and the SAGA complexes. The SAGA complex is a multiprotein complex that activates transcription by remodeling chromatin and mediating histone acetylation and deubiquitination. Within the SAGA complex, participates in a subcomplex that specifically deubiquitinates histone H2B. The SAGA complex is recruited to specific gene promoters by activators, where it is required for transcription. Required for nuclear receptor-mediated transactivation. Involved in transcription elongation by recruiting the THO complex onto nascent mRNA. The AMEX complex functions in docking export-competent ribonucleoprotein particles (mRNPs) to the nuclear entrance of the nuclear pore complex (nuclear basket). AMEX participates in mRNA export and accurate chromatin positioning in the nucleus by tethering genes to the nuclear periphery (By similarity).</text>
</comment>
<comment type="subunit">
    <text evidence="2">Component of the nuclear pore complex (NPC)-associated AMEX complex (anchoring and mRNA export complex), composed of at least e(y)2 and xmas-2. Component of the SAGA transcription coactivator-HAT complexes, at least composed of Ada2b, e(y)2, Pcaf/Gcn5, Taf10 and Nipped-A/Trrap. Within the SAGA complex, e(y)2, Sgf11, and not/nonstop form an additional subcomplex of SAGA called the DUB module (deubiquitination module). Component of the THO complex, composed of at least e(y)2, HPR1, THO2, THOC5, THOC6 and THOC7. Interacts with e(y)1. Interacts with su(Hw) (via zinc fingers). Interacts with xmas-2; required for localization to the nuclear periphery. Interacts with the nuclear pore complex (NPC).</text>
</comment>
<comment type="subcellular location">
    <subcellularLocation>
        <location evidence="2">Nucleus</location>
        <location evidence="2">Nucleoplasm</location>
    </subcellularLocation>
    <subcellularLocation>
        <location evidence="2">Cytoplasm</location>
    </subcellularLocation>
</comment>
<comment type="similarity">
    <text evidence="2">Belongs to the ENY2 family.</text>
</comment>
<sequence>MTICDTVDQYTIMSGDRLKIKDLLCNRLTECGWRNEVRLLCRNILLEKSANNSVSVDQLISEVTPKARTLVPDAVKKELLMKIRTILAETDEDN</sequence>
<organism>
    <name type="scientific">Drosophila grimshawi</name>
    <name type="common">Hawaiian fruit fly</name>
    <name type="synonym">Idiomyia grimshawi</name>
    <dbReference type="NCBI Taxonomy" id="7222"/>
    <lineage>
        <taxon>Eukaryota</taxon>
        <taxon>Metazoa</taxon>
        <taxon>Ecdysozoa</taxon>
        <taxon>Arthropoda</taxon>
        <taxon>Hexapoda</taxon>
        <taxon>Insecta</taxon>
        <taxon>Pterygota</taxon>
        <taxon>Neoptera</taxon>
        <taxon>Endopterygota</taxon>
        <taxon>Diptera</taxon>
        <taxon>Brachycera</taxon>
        <taxon>Muscomorpha</taxon>
        <taxon>Ephydroidea</taxon>
        <taxon>Drosophilidae</taxon>
        <taxon>Drosophila</taxon>
        <taxon>Hawaiian Drosophila</taxon>
    </lineage>
</organism>
<gene>
    <name evidence="2" type="primary">e(y)2</name>
    <name type="ORF">GH11892</name>
</gene>
<protein>
    <recommendedName>
        <fullName evidence="2">Enhancer of yellow 2 transcription factor</fullName>
    </recommendedName>
</protein>
<proteinExistence type="inferred from homology"/>
<reference key="1">
    <citation type="journal article" date="2007" name="Nature">
        <title>Evolution of genes and genomes on the Drosophila phylogeny.</title>
        <authorList>
            <consortium name="Drosophila 12 genomes consortium"/>
        </authorList>
    </citation>
    <scope>NUCLEOTIDE SEQUENCE [LARGE SCALE GENOMIC DNA]</scope>
    <source>
        <strain>Tucson 15287-2541.00</strain>
    </source>
</reference>